<organism>
    <name type="scientific">Bradyrhizobium diazoefficiens (strain JCM 10833 / BCRC 13528 / IAM 13628 / NBRC 14792 / USDA 110)</name>
    <dbReference type="NCBI Taxonomy" id="224911"/>
    <lineage>
        <taxon>Bacteria</taxon>
        <taxon>Pseudomonadati</taxon>
        <taxon>Pseudomonadota</taxon>
        <taxon>Alphaproteobacteria</taxon>
        <taxon>Hyphomicrobiales</taxon>
        <taxon>Nitrobacteraceae</taxon>
        <taxon>Bradyrhizobium</taxon>
    </lineage>
</organism>
<sequence length="362" mass="38030">MSLSFRNEIDITVWLSGATIADVAIQPRSRPPLTRLFAGKPAASLLPVLPRLFSLCSVAHQVAFLSAVEAAQGQEAAPATVRHRLTVVVAERLTELLRGLFVGRRALDGTSAAAMRAVMQASALLGGPSEAVPQALRRDAVAQIRTAVGTLGISEDHALASGSALAASVEGCDGRLVSRPLAEPSFLTAANDLDIVARLLADGAAYSDAPDLCGQIPETGVWARRAHREEISSTAAGPAARLRARIAEVAQLCTWLDHGDADLERGIVASYRLGAGKGAAAVECARGRLYHAVVLDDEDRIVNFEFLAPTEWNFHARGPLVQSLKGATLAAGRPGQDAVRALVGSFDPCVGFSLDFREAGHA</sequence>
<evidence type="ECO:0000305" key="1"/>
<reference key="1">
    <citation type="journal article" date="1994" name="Gene">
        <title>Organization of the hydrogenase gene cluster from Bradyrhizobium japonicum: sequences and analysis of five more hydrogenase-related genes.</title>
        <authorList>
            <person name="Fu C."/>
            <person name="Maier R.J."/>
        </authorList>
    </citation>
    <scope>NUCLEOTIDE SEQUENCE [GENOMIC DNA]</scope>
    <source>
        <strain>JCM 10833 / BCRC 13528 / IAM 13628 / NBRC 14792 / USDA 110</strain>
    </source>
</reference>
<reference key="2">
    <citation type="journal article" date="2002" name="DNA Res.">
        <title>Complete genomic sequence of nitrogen-fixing symbiotic bacterium Bradyrhizobium japonicum USDA110.</title>
        <authorList>
            <person name="Kaneko T."/>
            <person name="Nakamura Y."/>
            <person name="Sato S."/>
            <person name="Minamisawa K."/>
            <person name="Uchiumi T."/>
            <person name="Sasamoto S."/>
            <person name="Watanabe A."/>
            <person name="Idesawa K."/>
            <person name="Iriguchi M."/>
            <person name="Kawashima K."/>
            <person name="Kohara M."/>
            <person name="Matsumoto M."/>
            <person name="Shimpo S."/>
            <person name="Tsuruoka H."/>
            <person name="Wada T."/>
            <person name="Yamada M."/>
            <person name="Tabata S."/>
        </authorList>
    </citation>
    <scope>NUCLEOTIDE SEQUENCE [LARGE SCALE GENOMIC DNA]</scope>
    <source>
        <strain>JCM 10833 / BCRC 13528 / IAM 13628 / NBRC 14792 / USDA 110</strain>
    </source>
</reference>
<keyword id="KW-1185">Reference proteome</keyword>
<dbReference type="EMBL" id="L25760">
    <property type="protein sequence ID" value="AAA50826.1"/>
    <property type="molecule type" value="Genomic_DNA"/>
</dbReference>
<dbReference type="EMBL" id="BA000040">
    <property type="protein sequence ID" value="BAC52198.1"/>
    <property type="molecule type" value="Genomic_DNA"/>
</dbReference>
<dbReference type="RefSeq" id="NP_773573.1">
    <property type="nucleotide sequence ID" value="NC_004463.1"/>
</dbReference>
<dbReference type="RefSeq" id="WP_011089671.1">
    <property type="nucleotide sequence ID" value="NC_004463.1"/>
</dbReference>
<dbReference type="SMR" id="P48342"/>
<dbReference type="STRING" id="224911.AAV28_32255"/>
<dbReference type="EnsemblBacteria" id="BAC52198">
    <property type="protein sequence ID" value="BAC52198"/>
    <property type="gene ID" value="BAC52198"/>
</dbReference>
<dbReference type="GeneID" id="46493899"/>
<dbReference type="KEGG" id="bja:bll6933"/>
<dbReference type="PATRIC" id="fig|224911.5.peg.7104"/>
<dbReference type="eggNOG" id="COG0374">
    <property type="taxonomic scope" value="Bacteria"/>
</dbReference>
<dbReference type="HOGENOM" id="CLU_054514_0_0_5"/>
<dbReference type="InParanoid" id="P48342"/>
<dbReference type="OrthoDB" id="9157196at2"/>
<dbReference type="Proteomes" id="UP000002526">
    <property type="component" value="Chromosome"/>
</dbReference>
<dbReference type="GO" id="GO:0016151">
    <property type="term" value="F:nickel cation binding"/>
    <property type="evidence" value="ECO:0007669"/>
    <property type="project" value="InterPro"/>
</dbReference>
<dbReference type="Gene3D" id="1.10.645.10">
    <property type="entry name" value="Cytochrome-c3 Hydrogenase, chain B"/>
    <property type="match status" value="1"/>
</dbReference>
<dbReference type="InterPro" id="IPR001501">
    <property type="entry name" value="Ni-dep_hyd_lsu"/>
</dbReference>
<dbReference type="InterPro" id="IPR029014">
    <property type="entry name" value="NiFe-Hase_large"/>
</dbReference>
<dbReference type="InterPro" id="IPR050867">
    <property type="entry name" value="NiFe/NiFeSe_hydrgnase_LSU"/>
</dbReference>
<dbReference type="PANTHER" id="PTHR42958:SF4">
    <property type="entry name" value="HYDROGENASE EXPRESSION_FORMATION PROTEIN HUPK"/>
    <property type="match status" value="1"/>
</dbReference>
<dbReference type="PANTHER" id="PTHR42958">
    <property type="entry name" value="HYDROGENASE-2 LARGE CHAIN"/>
    <property type="match status" value="1"/>
</dbReference>
<dbReference type="Pfam" id="PF00374">
    <property type="entry name" value="NiFeSe_Hases"/>
    <property type="match status" value="1"/>
</dbReference>
<dbReference type="SUPFAM" id="SSF56762">
    <property type="entry name" value="HydB/Nqo4-like"/>
    <property type="match status" value="1"/>
</dbReference>
<name>HUPK_BRADU</name>
<feature type="chain" id="PRO_0000201431" description="Hydrogenase expression/formation protein HupK">
    <location>
        <begin position="1"/>
        <end position="362"/>
    </location>
</feature>
<proteinExistence type="inferred from homology"/>
<gene>
    <name type="primary">hupK</name>
    <name type="ordered locus">bll6933</name>
</gene>
<protein>
    <recommendedName>
        <fullName>Hydrogenase expression/formation protein HupK</fullName>
    </recommendedName>
</protein>
<comment type="similarity">
    <text evidence="1">Belongs to the HupK family.</text>
</comment>
<accession>P48342</accession>